<keyword id="KW-1003">Cell membrane</keyword>
<keyword id="KW-0175">Coiled coil</keyword>
<keyword id="KW-0472">Membrane</keyword>
<keyword id="KW-1185">Reference proteome</keyword>
<keyword id="KW-0812">Transmembrane</keyword>
<keyword id="KW-1133">Transmembrane helix</keyword>
<accession>A3DIE5</accession>
<protein>
    <recommendedName>
        <fullName evidence="7">Anti-sigma-I factor RsgI7</fullName>
    </recommendedName>
</protein>
<comment type="function">
    <text evidence="1">Anti-sigma factor for SigI7. Negatively regulates SigI7 activity through direct interaction.</text>
</comment>
<comment type="subunit">
    <text evidence="3">Interacts (via RsgI N-terminal anti-sigma domain) with SigI7.</text>
</comment>
<comment type="subcellular location">
    <subcellularLocation>
        <location evidence="7">Cell membrane</location>
        <topology evidence="2">Single-pass membrane protein</topology>
    </subcellularLocation>
</comment>
<comment type="induction">
    <text evidence="5">Up-regulated in pretreated yellow poplar (PYP)-grown cells.</text>
</comment>
<dbReference type="EMBL" id="CP000568">
    <property type="protein sequence ID" value="ABN53724.1"/>
    <property type="molecule type" value="Genomic_DNA"/>
</dbReference>
<dbReference type="RefSeq" id="WP_020457850.1">
    <property type="nucleotide sequence ID" value="NC_009012.1"/>
</dbReference>
<dbReference type="SMR" id="A3DIE5"/>
<dbReference type="STRING" id="203119.Cthe_2522"/>
<dbReference type="GeneID" id="35804634"/>
<dbReference type="KEGG" id="cth:Cthe_2522"/>
<dbReference type="eggNOG" id="ENOG5032YNU">
    <property type="taxonomic scope" value="Bacteria"/>
</dbReference>
<dbReference type="HOGENOM" id="CLU_504069_0_0_9"/>
<dbReference type="OrthoDB" id="9800626at2"/>
<dbReference type="Proteomes" id="UP000002145">
    <property type="component" value="Chromosome"/>
</dbReference>
<dbReference type="GO" id="GO:0005886">
    <property type="term" value="C:plasma membrane"/>
    <property type="evidence" value="ECO:0007669"/>
    <property type="project" value="UniProtKB-SubCell"/>
</dbReference>
<dbReference type="InterPro" id="IPR024449">
    <property type="entry name" value="Anti-sigma_RsgI_N"/>
</dbReference>
<dbReference type="InterPro" id="IPR055431">
    <property type="entry name" value="RsgI_M"/>
</dbReference>
<dbReference type="Pfam" id="PF23750">
    <property type="entry name" value="RsgI_M"/>
    <property type="match status" value="1"/>
</dbReference>
<dbReference type="Pfam" id="PF12791">
    <property type="entry name" value="RsgI_N"/>
    <property type="match status" value="1"/>
</dbReference>
<dbReference type="PROSITE" id="PS51849">
    <property type="entry name" value="RSGI_N"/>
    <property type="match status" value="1"/>
</dbReference>
<sequence>MRAMVVDMNDKYAVVVNKEGQYIKIKRKAEHRLGYQVELPDRVIGFERRTLLKVVSVAAALLIVSSISFAVYSYNLPYSYVNVDINPSLEIILNMYNRIIDVKALNSEGEMLIEDSYKNSRLDEGVEKIIDSAVAQGFLKNDEENTIMLTVAGKNSRKVLEIKEEVESTANKVLNDDNVVSEVIVENIVLERREEARELGIAPGKLLLIEKLKEVDPKATTEEYKDKPVNEIVKTIRDIKKVPNENNRKDDDKKVNNEPNKPLPDRKADVETSAGVKENTAGPDAGIKPVNKTDNAKPNVGTDINNKENKTVSNAKIDSGIDKGNKDSKPNSNTKINNDVKKDNKDNKTNSDAKTFNDVSKDNKNDKADGNAKINNNINRDNKITPINPDNKFSSGGSKDDKDNKHVDSKDKMNNEDNKNINNGSCPQYNPYWNPYWNPYWNPYWGNPKEKEDMTKQNDEWFKKMQEEQKKQYDEWLKKMQEEQKKQHDEWVKKMEEMKNTEKMKNPYQENKIEKPKEAEKENKPDRPPEPGKEILKKRC</sequence>
<proteinExistence type="evidence at transcript level"/>
<evidence type="ECO:0000250" key="1">
    <source>
        <dbReference type="UniProtKB" id="A3DBH1"/>
    </source>
</evidence>
<evidence type="ECO:0000255" key="2"/>
<evidence type="ECO:0000255" key="3">
    <source>
        <dbReference type="PROSITE-ProRule" id="PRU01196"/>
    </source>
</evidence>
<evidence type="ECO:0000256" key="4">
    <source>
        <dbReference type="SAM" id="MobiDB-lite"/>
    </source>
</evidence>
<evidence type="ECO:0000269" key="5">
    <source>
    </source>
</evidence>
<evidence type="ECO:0000303" key="6">
    <source>
    </source>
</evidence>
<evidence type="ECO:0000305" key="7"/>
<evidence type="ECO:0000312" key="8">
    <source>
        <dbReference type="EMBL" id="ABN53724.1"/>
    </source>
</evidence>
<feature type="chain" id="PRO_0000436550" description="Anti-sigma-I factor RsgI7">
    <location>
        <begin position="1"/>
        <end position="540"/>
    </location>
</feature>
<feature type="topological domain" description="Cytoplasmic" evidence="7">
    <location>
        <begin position="1"/>
        <end position="50"/>
    </location>
</feature>
<feature type="transmembrane region" description="Helical" evidence="2">
    <location>
        <begin position="51"/>
        <end position="73"/>
    </location>
</feature>
<feature type="topological domain" description="Extracellular" evidence="7">
    <location>
        <begin position="74"/>
        <end position="540"/>
    </location>
</feature>
<feature type="domain" description="RsgI N-terminal anti-sigma" evidence="3">
    <location>
        <begin position="1"/>
        <end position="48"/>
    </location>
</feature>
<feature type="region of interest" description="Disordered" evidence="4">
    <location>
        <begin position="238"/>
        <end position="429"/>
    </location>
</feature>
<feature type="region of interest" description="Disordered" evidence="4">
    <location>
        <begin position="481"/>
        <end position="540"/>
    </location>
</feature>
<feature type="coiled-coil region" evidence="2">
    <location>
        <begin position="451"/>
        <end position="501"/>
    </location>
</feature>
<feature type="compositionally biased region" description="Basic and acidic residues" evidence="4">
    <location>
        <begin position="238"/>
        <end position="256"/>
    </location>
</feature>
<feature type="compositionally biased region" description="Basic and acidic residues" evidence="4">
    <location>
        <begin position="319"/>
        <end position="329"/>
    </location>
</feature>
<feature type="compositionally biased region" description="Basic and acidic residues" evidence="4">
    <location>
        <begin position="338"/>
        <end position="351"/>
    </location>
</feature>
<feature type="compositionally biased region" description="Basic and acidic residues" evidence="4">
    <location>
        <begin position="359"/>
        <end position="370"/>
    </location>
</feature>
<feature type="compositionally biased region" description="Basic and acidic residues" evidence="4">
    <location>
        <begin position="398"/>
        <end position="419"/>
    </location>
</feature>
<name>RSGI7_ACET2</name>
<gene>
    <name evidence="6" type="primary">rsgI7</name>
    <name evidence="8" type="ordered locus">Cthe_2522</name>
</gene>
<organism>
    <name type="scientific">Acetivibrio thermocellus (strain ATCC 27405 / DSM 1237 / JCM 9322 / NBRC 103400 / NCIMB 10682 / NRRL B-4536 / VPI 7372)</name>
    <name type="common">Clostridium thermocellum</name>
    <dbReference type="NCBI Taxonomy" id="203119"/>
    <lineage>
        <taxon>Bacteria</taxon>
        <taxon>Bacillati</taxon>
        <taxon>Bacillota</taxon>
        <taxon>Clostridia</taxon>
        <taxon>Eubacteriales</taxon>
        <taxon>Oscillospiraceae</taxon>
        <taxon>Acetivibrio</taxon>
    </lineage>
</organism>
<reference key="1">
    <citation type="submission" date="2007-02" db="EMBL/GenBank/DDBJ databases">
        <title>Complete sequence of Clostridium thermocellum ATCC 27405.</title>
        <authorList>
            <consortium name="US DOE Joint Genome Institute"/>
            <person name="Copeland A."/>
            <person name="Lucas S."/>
            <person name="Lapidus A."/>
            <person name="Barry K."/>
            <person name="Detter J.C."/>
            <person name="Glavina del Rio T."/>
            <person name="Hammon N."/>
            <person name="Israni S."/>
            <person name="Dalin E."/>
            <person name="Tice H."/>
            <person name="Pitluck S."/>
            <person name="Chertkov O."/>
            <person name="Brettin T."/>
            <person name="Bruce D."/>
            <person name="Han C."/>
            <person name="Tapia R."/>
            <person name="Gilna P."/>
            <person name="Schmutz J."/>
            <person name="Larimer F."/>
            <person name="Land M."/>
            <person name="Hauser L."/>
            <person name="Kyrpides N."/>
            <person name="Mikhailova N."/>
            <person name="Wu J.H.D."/>
            <person name="Newcomb M."/>
            <person name="Richardson P."/>
        </authorList>
    </citation>
    <scope>NUCLEOTIDE SEQUENCE [LARGE SCALE GENOMIC DNA]</scope>
    <source>
        <strain>ATCC 27405 / DSM 1237 / JCM 9322 / NBRC 103400 / NCIMB 10682 / NRRL B-4536 / VPI 7372</strain>
    </source>
</reference>
<reference key="2">
    <citation type="journal article" date="2010" name="FEMS Microbiol. Lett.">
        <title>The unique set of putative membrane-associated anti-sigma factors in Clostridium thermocellum suggests a novel extracellular carbohydrate-sensing mechanism involved in gene regulation.</title>
        <authorList>
            <person name="Kahel-Raifer H."/>
            <person name="Jindou S."/>
            <person name="Bahari L."/>
            <person name="Nataf Y."/>
            <person name="Shoham Y."/>
            <person name="Bayer E.A."/>
            <person name="Borovok I."/>
            <person name="Lamed R."/>
        </authorList>
    </citation>
    <scope>NOMENCLATURE</scope>
    <source>
        <strain>ATCC 27405 / DSM 1237 / JCM 9322 / NBRC 103400 / NCIMB 10682 / NRRL B-4536 / VPI 7372</strain>
    </source>
</reference>
<reference key="3">
    <citation type="journal article" date="2014" name="Front. Microbiol.">
        <title>Comparison of transcriptional profiles of Clostridium thermocellum grown on cellobiose and pretreated yellow poplar using RNA-Seq.</title>
        <authorList>
            <person name="Wei H."/>
            <person name="Fu Y."/>
            <person name="Magnusson L."/>
            <person name="Baker J.O."/>
            <person name="Maness P.C."/>
            <person name="Xu Q."/>
            <person name="Yang S."/>
            <person name="Bowersox A."/>
            <person name="Bogorad I."/>
            <person name="Wang W."/>
            <person name="Tucker M.P."/>
            <person name="Himmel M.E."/>
            <person name="Ding S.Y."/>
        </authorList>
    </citation>
    <scope>INDUCTION</scope>
    <source>
        <strain>ATCC 27405 / DSM 1237 / JCM 9322 / NBRC 103400 / NCIMB 10682 / NRRL B-4536 / VPI 7372</strain>
    </source>
</reference>